<gene>
    <name type="primary">KPI111</name>
    <name evidence="6" type="ordered locus">MTR_8g060550</name>
    <name evidence="7" type="ordered locus">MTR_8g461690</name>
</gene>
<name>KI111_MEDTR</name>
<evidence type="ECO:0000250" key="1">
    <source>
        <dbReference type="UniProtKB" id="G7LCV1"/>
    </source>
</evidence>
<evidence type="ECO:0000255" key="2"/>
<evidence type="ECO:0000269" key="3">
    <source>
    </source>
</evidence>
<evidence type="ECO:0000303" key="4">
    <source>
    </source>
</evidence>
<evidence type="ECO:0000305" key="5"/>
<evidence type="ECO:0000312" key="6">
    <source>
        <dbReference type="EMBL" id="AET02982.1"/>
    </source>
</evidence>
<evidence type="ECO:0000312" key="7">
    <source>
        <dbReference type="EMBL" id="KEH19505.1"/>
    </source>
</evidence>
<dbReference type="EMBL" id="CM001224">
    <property type="protein sequence ID" value="AET02982.1"/>
    <property type="molecule type" value="Genomic_DNA"/>
</dbReference>
<dbReference type="EMBL" id="CM001224">
    <property type="protein sequence ID" value="KEH19505.1"/>
    <property type="molecule type" value="Genomic_DNA"/>
</dbReference>
<dbReference type="RefSeq" id="XP_003628506.1">
    <property type="nucleotide sequence ID" value="XM_003628458.2"/>
</dbReference>
<dbReference type="RefSeq" id="XP_013445479.1">
    <property type="nucleotide sequence ID" value="XM_013590025.1"/>
</dbReference>
<dbReference type="SMR" id="G7LCV7"/>
<dbReference type="STRING" id="3880.G7LCV7"/>
<dbReference type="MEROPS" id="I03.029"/>
<dbReference type="PaxDb" id="3880-AET02982"/>
<dbReference type="GeneID" id="11406267"/>
<dbReference type="KEGG" id="mtr:11406267"/>
<dbReference type="eggNOG" id="ENOG502S0HP">
    <property type="taxonomic scope" value="Eukaryota"/>
</dbReference>
<dbReference type="HOGENOM" id="CLU_090145_3_0_1"/>
<dbReference type="OMA" id="HFANNIQ"/>
<dbReference type="OrthoDB" id="1918435at2759"/>
<dbReference type="Proteomes" id="UP000002051">
    <property type="component" value="Chromosome 8"/>
</dbReference>
<dbReference type="GO" id="GO:0048046">
    <property type="term" value="C:apoplast"/>
    <property type="evidence" value="ECO:0007669"/>
    <property type="project" value="UniProtKB-SubCell"/>
</dbReference>
<dbReference type="GO" id="GO:0004867">
    <property type="term" value="F:serine-type endopeptidase inhibitor activity"/>
    <property type="evidence" value="ECO:0007669"/>
    <property type="project" value="UniProtKB-KW"/>
</dbReference>
<dbReference type="CDD" id="cd23367">
    <property type="entry name" value="beta-trefoil_STI_KPI104-like"/>
    <property type="match status" value="1"/>
</dbReference>
<dbReference type="Gene3D" id="2.80.10.50">
    <property type="match status" value="1"/>
</dbReference>
<dbReference type="InterPro" id="IPR011065">
    <property type="entry name" value="Kunitz_inhibitor_STI-like_sf"/>
</dbReference>
<dbReference type="InterPro" id="IPR002160">
    <property type="entry name" value="Prot_inh_Kunz-lg"/>
</dbReference>
<dbReference type="PANTHER" id="PTHR33107">
    <property type="entry name" value="KUNITZ TRYPSIN INHIBITOR 2"/>
    <property type="match status" value="1"/>
</dbReference>
<dbReference type="PANTHER" id="PTHR33107:SF31">
    <property type="entry name" value="KUNITZ TYPE TRYPSIN INHIBITOR 104"/>
    <property type="match status" value="1"/>
</dbReference>
<dbReference type="Pfam" id="PF00197">
    <property type="entry name" value="Kunitz_legume"/>
    <property type="match status" value="1"/>
</dbReference>
<dbReference type="SMART" id="SM00452">
    <property type="entry name" value="STI"/>
    <property type="match status" value="1"/>
</dbReference>
<dbReference type="SUPFAM" id="SSF50386">
    <property type="entry name" value="STI-like"/>
    <property type="match status" value="1"/>
</dbReference>
<keyword id="KW-0052">Apoplast</keyword>
<keyword id="KW-1015">Disulfide bond</keyword>
<keyword id="KW-0646">Protease inhibitor</keyword>
<keyword id="KW-1185">Reference proteome</keyword>
<keyword id="KW-0964">Secreted</keyword>
<keyword id="KW-0722">Serine protease inhibitor</keyword>
<keyword id="KW-0732">Signal</keyword>
<protein>
    <recommendedName>
        <fullName evidence="4">Kunitz type trypsin inhibitor 111</fullName>
    </recommendedName>
</protein>
<reference key="1">
    <citation type="journal article" date="2011" name="Nature">
        <title>The Medicago genome provides insight into the evolution of rhizobial symbioses.</title>
        <authorList>
            <person name="Young N.D."/>
            <person name="Debelle F."/>
            <person name="Oldroyd G.E.D."/>
            <person name="Geurts R."/>
            <person name="Cannon S.B."/>
            <person name="Udvardi M.K."/>
            <person name="Benedito V.A."/>
            <person name="Mayer K.F.X."/>
            <person name="Gouzy J."/>
            <person name="Schoof H."/>
            <person name="Van de Peer Y."/>
            <person name="Proost S."/>
            <person name="Cook D.R."/>
            <person name="Meyers B.C."/>
            <person name="Spannagl M."/>
            <person name="Cheung F."/>
            <person name="De Mita S."/>
            <person name="Krishnakumar V."/>
            <person name="Gundlach H."/>
            <person name="Zhou S."/>
            <person name="Mudge J."/>
            <person name="Bharti A.K."/>
            <person name="Murray J.D."/>
            <person name="Naoumkina M.A."/>
            <person name="Rosen B."/>
            <person name="Silverstein K.A.T."/>
            <person name="Tang H."/>
            <person name="Rombauts S."/>
            <person name="Zhao P.X."/>
            <person name="Zhou P."/>
            <person name="Barbe V."/>
            <person name="Bardou P."/>
            <person name="Bechner M."/>
            <person name="Bellec A."/>
            <person name="Berger A."/>
            <person name="Berges H."/>
            <person name="Bidwell S."/>
            <person name="Bisseling T."/>
            <person name="Choisne N."/>
            <person name="Couloux A."/>
            <person name="Denny R."/>
            <person name="Deshpande S."/>
            <person name="Dai X."/>
            <person name="Doyle J.J."/>
            <person name="Dudez A.-M."/>
            <person name="Farmer A.D."/>
            <person name="Fouteau S."/>
            <person name="Franken C."/>
            <person name="Gibelin C."/>
            <person name="Gish J."/>
            <person name="Goldstein S."/>
            <person name="Gonzalez A.J."/>
            <person name="Green P.J."/>
            <person name="Hallab A."/>
            <person name="Hartog M."/>
            <person name="Hua A."/>
            <person name="Humphray S.J."/>
            <person name="Jeong D.-H."/>
            <person name="Jing Y."/>
            <person name="Jocker A."/>
            <person name="Kenton S.M."/>
            <person name="Kim D.-J."/>
            <person name="Klee K."/>
            <person name="Lai H."/>
            <person name="Lang C."/>
            <person name="Lin S."/>
            <person name="Macmil S.L."/>
            <person name="Magdelenat G."/>
            <person name="Matthews L."/>
            <person name="McCorrison J."/>
            <person name="Monaghan E.L."/>
            <person name="Mun J.-H."/>
            <person name="Najar F.Z."/>
            <person name="Nicholson C."/>
            <person name="Noirot C."/>
            <person name="O'Bleness M."/>
            <person name="Paule C.R."/>
            <person name="Poulain J."/>
            <person name="Prion F."/>
            <person name="Qin B."/>
            <person name="Qu C."/>
            <person name="Retzel E.F."/>
            <person name="Riddle C."/>
            <person name="Sallet E."/>
            <person name="Samain S."/>
            <person name="Samson N."/>
            <person name="Sanders I."/>
            <person name="Saurat O."/>
            <person name="Scarpelli C."/>
            <person name="Schiex T."/>
            <person name="Segurens B."/>
            <person name="Severin A.J."/>
            <person name="Sherrier D.J."/>
            <person name="Shi R."/>
            <person name="Sims S."/>
            <person name="Singer S.R."/>
            <person name="Sinharoy S."/>
            <person name="Sterck L."/>
            <person name="Viollet A."/>
            <person name="Wang B.-B."/>
            <person name="Wang K."/>
            <person name="Wang M."/>
            <person name="Wang X."/>
            <person name="Warfsmann J."/>
            <person name="Weissenbach J."/>
            <person name="White D.D."/>
            <person name="White J.D."/>
            <person name="Wiley G.B."/>
            <person name="Wincker P."/>
            <person name="Xing Y."/>
            <person name="Yang L."/>
            <person name="Yao Z."/>
            <person name="Ying F."/>
            <person name="Zhai J."/>
            <person name="Zhou L."/>
            <person name="Zuber A."/>
            <person name="Denarie J."/>
            <person name="Dixon R.A."/>
            <person name="May G.D."/>
            <person name="Schwartz D.C."/>
            <person name="Rogers J."/>
            <person name="Quetier F."/>
            <person name="Town C.D."/>
            <person name="Roe B.A."/>
        </authorList>
    </citation>
    <scope>NUCLEOTIDE SEQUENCE [LARGE SCALE GENOMIC DNA]</scope>
    <source>
        <strain>cv. Jemalong A17</strain>
    </source>
</reference>
<reference key="2">
    <citation type="journal article" date="2014" name="BMC Genomics">
        <title>An improved genome release (version Mt4.0) for the model legume Medicago truncatula.</title>
        <authorList>
            <person name="Tang H."/>
            <person name="Krishnakumar V."/>
            <person name="Bidwell S."/>
            <person name="Rosen B."/>
            <person name="Chan A."/>
            <person name="Zhou S."/>
            <person name="Gentzbittel L."/>
            <person name="Childs K.L."/>
            <person name="Yandell M."/>
            <person name="Gundlach H."/>
            <person name="Mayer K.F."/>
            <person name="Schwartz D.C."/>
            <person name="Town C.D."/>
        </authorList>
    </citation>
    <scope>GENOME REANNOTATION</scope>
    <source>
        <strain>cv. Jemalong A17</strain>
    </source>
</reference>
<reference key="3">
    <citation type="journal article" date="2013" name="Plant J.">
        <title>A tandem Kunitz protease inhibitor (KPI106)-serine carboxypeptidase (SCP1) controls mycorrhiza establishment and arbuscule development in Medicago truncatula.</title>
        <authorList>
            <person name="Rech S.S."/>
            <person name="Heidt S."/>
            <person name="Requena N."/>
        </authorList>
    </citation>
    <scope>INTERACTION WITH SCP1</scope>
    <scope>GENE FAMILY</scope>
    <scope>NOMENCLATURE</scope>
</reference>
<organism>
    <name type="scientific">Medicago truncatula</name>
    <name type="common">Barrel medic</name>
    <name type="synonym">Medicago tribuloides</name>
    <dbReference type="NCBI Taxonomy" id="3880"/>
    <lineage>
        <taxon>Eukaryota</taxon>
        <taxon>Viridiplantae</taxon>
        <taxon>Streptophyta</taxon>
        <taxon>Embryophyta</taxon>
        <taxon>Tracheophyta</taxon>
        <taxon>Spermatophyta</taxon>
        <taxon>Magnoliopsida</taxon>
        <taxon>eudicotyledons</taxon>
        <taxon>Gunneridae</taxon>
        <taxon>Pentapetalae</taxon>
        <taxon>rosids</taxon>
        <taxon>fabids</taxon>
        <taxon>Fabales</taxon>
        <taxon>Fabaceae</taxon>
        <taxon>Papilionoideae</taxon>
        <taxon>50 kb inversion clade</taxon>
        <taxon>NPAAA clade</taxon>
        <taxon>Hologalegina</taxon>
        <taxon>IRL clade</taxon>
        <taxon>Trifolieae</taxon>
        <taxon>Medicago</taxon>
    </lineage>
</organism>
<sequence>MSTISFTIFILANVWLLVVTTSIAQFVIDTSGEPVENDEDYFIRPAITGNGGSLTLVTRNSCPFNVGLDPDAPQGFAVLLSPFVSNREEDEVRLGRDLRVIFQAGTSCGQSTEWRLGERDATTGRRFIITGRDDSTVGSYGNFFRIVQTPSRGIFNIQWCPTEVCPSCKFECGTVGIVRENGKILLALDGSALPVAFQKE</sequence>
<feature type="signal peptide" evidence="2">
    <location>
        <begin position="1"/>
        <end position="24"/>
    </location>
</feature>
<feature type="chain" id="PRO_5014574217" description="Kunitz type trypsin inhibitor 111">
    <location>
        <begin position="25"/>
        <end position="200"/>
    </location>
</feature>
<feature type="site" description="Important in determining the strength and specificity of the interaction with its subsrate" evidence="1">
    <location>
        <position position="169"/>
    </location>
</feature>
<feature type="disulfide bond" evidence="1">
    <location>
        <begin position="62"/>
        <end position="108"/>
    </location>
</feature>
<feature type="disulfide bond" evidence="1">
    <location>
        <begin position="160"/>
        <end position="172"/>
    </location>
</feature>
<feature type="disulfide bond" evidence="1">
    <location>
        <begin position="165"/>
        <end position="168"/>
    </location>
</feature>
<comment type="subunit">
    <text evidence="3">Interacts with SCP1.</text>
</comment>
<comment type="subcellular location">
    <subcellularLocation>
        <location evidence="1">Secreted</location>
    </subcellularLocation>
    <subcellularLocation>
        <location evidence="1">Secreted</location>
        <location evidence="1">Extracellular space</location>
        <location evidence="1">Apoplast</location>
    </subcellularLocation>
</comment>
<comment type="similarity">
    <text evidence="5">Belongs to the protease inhibitor I3 (leguminous Kunitz-type inhibitor) family.</text>
</comment>
<proteinExistence type="evidence at protein level"/>
<accession>G7LCV7</accession>